<organism>
    <name type="scientific">Bacillus subtilis (strain 168)</name>
    <dbReference type="NCBI Taxonomy" id="224308"/>
    <lineage>
        <taxon>Bacteria</taxon>
        <taxon>Bacillati</taxon>
        <taxon>Bacillota</taxon>
        <taxon>Bacilli</taxon>
        <taxon>Bacillales</taxon>
        <taxon>Bacillaceae</taxon>
        <taxon>Bacillus</taxon>
    </lineage>
</organism>
<name>YXEH_BACSU</name>
<evidence type="ECO:0000250" key="1"/>
<evidence type="ECO:0000305" key="2"/>
<gene>
    <name type="primary">yxeH</name>
    <name type="synonym">IP1B</name>
    <name type="ordered locus">BSU39550</name>
</gene>
<feature type="chain" id="PRO_0000054430" description="Putative phosphatase YxeH">
    <location>
        <begin position="1"/>
        <end position="270"/>
    </location>
</feature>
<feature type="active site" description="Nucleophile" evidence="1">
    <location>
        <position position="8"/>
    </location>
</feature>
<feature type="binding site" evidence="1">
    <location>
        <position position="8"/>
    </location>
    <ligand>
        <name>Mg(2+)</name>
        <dbReference type="ChEBI" id="CHEBI:18420"/>
    </ligand>
</feature>
<feature type="binding site" evidence="1">
    <location>
        <position position="9"/>
    </location>
    <ligand>
        <name>phosphate</name>
        <dbReference type="ChEBI" id="CHEBI:43474"/>
    </ligand>
</feature>
<feature type="binding site" evidence="1">
    <location>
        <position position="10"/>
    </location>
    <ligand>
        <name>Mg(2+)</name>
        <dbReference type="ChEBI" id="CHEBI:18420"/>
    </ligand>
</feature>
<feature type="binding site" evidence="1">
    <location>
        <begin position="42"/>
        <end position="43"/>
    </location>
    <ligand>
        <name>phosphate</name>
        <dbReference type="ChEBI" id="CHEBI:43474"/>
    </ligand>
</feature>
<feature type="binding site" evidence="1">
    <location>
        <position position="196"/>
    </location>
    <ligand>
        <name>phosphate</name>
        <dbReference type="ChEBI" id="CHEBI:43474"/>
    </ligand>
</feature>
<feature type="binding site" evidence="1">
    <location>
        <position position="219"/>
    </location>
    <ligand>
        <name>Mg(2+)</name>
        <dbReference type="ChEBI" id="CHEBI:18420"/>
    </ligand>
</feature>
<feature type="binding site" evidence="1">
    <location>
        <position position="222"/>
    </location>
    <ligand>
        <name>phosphate</name>
        <dbReference type="ChEBI" id="CHEBI:43474"/>
    </ligand>
</feature>
<accession>P54947</accession>
<proteinExistence type="inferred from homology"/>
<protein>
    <recommendedName>
        <fullName>Putative phosphatase YxeH</fullName>
        <ecNumber>3.1.3.-</ecNumber>
    </recommendedName>
</protein>
<dbReference type="EC" id="3.1.3.-"/>
<dbReference type="EMBL" id="D45912">
    <property type="protein sequence ID" value="BAA08324.1"/>
    <property type="molecule type" value="Genomic_DNA"/>
</dbReference>
<dbReference type="EMBL" id="AL009126">
    <property type="protein sequence ID" value="CAB15991.1"/>
    <property type="molecule type" value="Genomic_DNA"/>
</dbReference>
<dbReference type="PIR" id="B70075">
    <property type="entry name" value="B70075"/>
</dbReference>
<dbReference type="SMR" id="P54947"/>
<dbReference type="FunCoup" id="P54947">
    <property type="interactions" value="184"/>
</dbReference>
<dbReference type="STRING" id="224308.BSU39550"/>
<dbReference type="jPOST" id="P54947"/>
<dbReference type="PaxDb" id="224308-BSU39550"/>
<dbReference type="EnsemblBacteria" id="CAB15991">
    <property type="protein sequence ID" value="CAB15991"/>
    <property type="gene ID" value="BSU_39550"/>
</dbReference>
<dbReference type="GeneID" id="937571"/>
<dbReference type="KEGG" id="bsu:BSU39550"/>
<dbReference type="PATRIC" id="fig|224308.179.peg.4280"/>
<dbReference type="eggNOG" id="COG0561">
    <property type="taxonomic scope" value="Bacteria"/>
</dbReference>
<dbReference type="InParanoid" id="P54947"/>
<dbReference type="OrthoDB" id="9790031at2"/>
<dbReference type="PhylomeDB" id="P54947"/>
<dbReference type="BioCyc" id="BSUB:BSU39550-MONOMER"/>
<dbReference type="SABIO-RK" id="P54947"/>
<dbReference type="Proteomes" id="UP000001570">
    <property type="component" value="Chromosome"/>
</dbReference>
<dbReference type="GO" id="GO:0005829">
    <property type="term" value="C:cytosol"/>
    <property type="evidence" value="ECO:0000318"/>
    <property type="project" value="GO_Central"/>
</dbReference>
<dbReference type="GO" id="GO:0000287">
    <property type="term" value="F:magnesium ion binding"/>
    <property type="evidence" value="ECO:0000318"/>
    <property type="project" value="GO_Central"/>
</dbReference>
<dbReference type="GO" id="GO:0016791">
    <property type="term" value="F:phosphatase activity"/>
    <property type="evidence" value="ECO:0000318"/>
    <property type="project" value="GO_Central"/>
</dbReference>
<dbReference type="CDD" id="cd07516">
    <property type="entry name" value="HAD_Pase"/>
    <property type="match status" value="1"/>
</dbReference>
<dbReference type="Gene3D" id="3.30.1240.10">
    <property type="match status" value="1"/>
</dbReference>
<dbReference type="Gene3D" id="3.40.50.1000">
    <property type="entry name" value="HAD superfamily/HAD-like"/>
    <property type="match status" value="1"/>
</dbReference>
<dbReference type="InterPro" id="IPR000150">
    <property type="entry name" value="Cof"/>
</dbReference>
<dbReference type="InterPro" id="IPR036412">
    <property type="entry name" value="HAD-like_sf"/>
</dbReference>
<dbReference type="InterPro" id="IPR006379">
    <property type="entry name" value="HAD-SF_hydro_IIB"/>
</dbReference>
<dbReference type="InterPro" id="IPR023214">
    <property type="entry name" value="HAD_sf"/>
</dbReference>
<dbReference type="NCBIfam" id="TIGR00099">
    <property type="entry name" value="Cof-subfamily"/>
    <property type="match status" value="1"/>
</dbReference>
<dbReference type="NCBIfam" id="TIGR01484">
    <property type="entry name" value="HAD-SF-IIB"/>
    <property type="match status" value="1"/>
</dbReference>
<dbReference type="NCBIfam" id="NF007806">
    <property type="entry name" value="PRK10513.1"/>
    <property type="match status" value="1"/>
</dbReference>
<dbReference type="PANTHER" id="PTHR10000:SF8">
    <property type="entry name" value="HAD SUPERFAMILY HYDROLASE-LIKE, TYPE 3"/>
    <property type="match status" value="1"/>
</dbReference>
<dbReference type="PANTHER" id="PTHR10000">
    <property type="entry name" value="PHOSPHOSERINE PHOSPHATASE"/>
    <property type="match status" value="1"/>
</dbReference>
<dbReference type="Pfam" id="PF08282">
    <property type="entry name" value="Hydrolase_3"/>
    <property type="match status" value="1"/>
</dbReference>
<dbReference type="SFLD" id="SFLDG01144">
    <property type="entry name" value="C2.B.4:_PGP_Like"/>
    <property type="match status" value="1"/>
</dbReference>
<dbReference type="SFLD" id="SFLDS00003">
    <property type="entry name" value="Haloacid_Dehalogenase"/>
    <property type="match status" value="1"/>
</dbReference>
<dbReference type="SUPFAM" id="SSF56784">
    <property type="entry name" value="HAD-like"/>
    <property type="match status" value="1"/>
</dbReference>
<dbReference type="PROSITE" id="PS01228">
    <property type="entry name" value="COF_1"/>
    <property type="match status" value="1"/>
</dbReference>
<dbReference type="PROSITE" id="PS01229">
    <property type="entry name" value="COF_2"/>
    <property type="match status" value="1"/>
</dbReference>
<sequence>MYKLIAIDMDGTLLNDHHEVTEEVRDALHAAKAEGVKIVLCTGRPIGGVQRYLDELNLIEEGDYVIAYNGALVQNTHTNEVVSELSLGYDDLTSLYDLSLELKTPMHFFDSSNLYTPNRDISEFTVYESYVTQVPLHFRKIDEVPKDILIPKVMFIDKPENLSRVITSIPKDVREKYTMVRSAPFFYEILHSEASKGNAVRQLAQLLGIEQAEVMCIGDNGNDLTMIEWAGCGVAMANAIPEVLEAANFQTRSNNEHGVAHAIHELVLAK</sequence>
<comment type="cofactor">
    <cofactor evidence="1">
        <name>Mg(2+)</name>
        <dbReference type="ChEBI" id="CHEBI:18420"/>
    </cofactor>
</comment>
<comment type="similarity">
    <text evidence="2">Belongs to the HAD-like hydrolase superfamily. Cof family.</text>
</comment>
<keyword id="KW-0378">Hydrolase</keyword>
<keyword id="KW-0460">Magnesium</keyword>
<keyword id="KW-0479">Metal-binding</keyword>
<keyword id="KW-1185">Reference proteome</keyword>
<reference key="1">
    <citation type="journal article" date="1995" name="DNA Res.">
        <title>Cloning and sequencing of a 23-kb region of the Bacillus subtilis genome between the iol and hut operons.</title>
        <authorList>
            <person name="Yoshida K."/>
            <person name="Fujimyra M."/>
            <person name="Yanai N."/>
            <person name="Fujita Y."/>
        </authorList>
    </citation>
    <scope>NUCLEOTIDE SEQUENCE [GENOMIC DNA]</scope>
    <source>
        <strain>168 / BGSC1A1</strain>
    </source>
</reference>
<reference key="2">
    <citation type="journal article" date="1997" name="Nature">
        <title>The complete genome sequence of the Gram-positive bacterium Bacillus subtilis.</title>
        <authorList>
            <person name="Kunst F."/>
            <person name="Ogasawara N."/>
            <person name="Moszer I."/>
            <person name="Albertini A.M."/>
            <person name="Alloni G."/>
            <person name="Azevedo V."/>
            <person name="Bertero M.G."/>
            <person name="Bessieres P."/>
            <person name="Bolotin A."/>
            <person name="Borchert S."/>
            <person name="Borriss R."/>
            <person name="Boursier L."/>
            <person name="Brans A."/>
            <person name="Braun M."/>
            <person name="Brignell S.C."/>
            <person name="Bron S."/>
            <person name="Brouillet S."/>
            <person name="Bruschi C.V."/>
            <person name="Caldwell B."/>
            <person name="Capuano V."/>
            <person name="Carter N.M."/>
            <person name="Choi S.-K."/>
            <person name="Codani J.-J."/>
            <person name="Connerton I.F."/>
            <person name="Cummings N.J."/>
            <person name="Daniel R.A."/>
            <person name="Denizot F."/>
            <person name="Devine K.M."/>
            <person name="Duesterhoeft A."/>
            <person name="Ehrlich S.D."/>
            <person name="Emmerson P.T."/>
            <person name="Entian K.-D."/>
            <person name="Errington J."/>
            <person name="Fabret C."/>
            <person name="Ferrari E."/>
            <person name="Foulger D."/>
            <person name="Fritz C."/>
            <person name="Fujita M."/>
            <person name="Fujita Y."/>
            <person name="Fuma S."/>
            <person name="Galizzi A."/>
            <person name="Galleron N."/>
            <person name="Ghim S.-Y."/>
            <person name="Glaser P."/>
            <person name="Goffeau A."/>
            <person name="Golightly E.J."/>
            <person name="Grandi G."/>
            <person name="Guiseppi G."/>
            <person name="Guy B.J."/>
            <person name="Haga K."/>
            <person name="Haiech J."/>
            <person name="Harwood C.R."/>
            <person name="Henaut A."/>
            <person name="Hilbert H."/>
            <person name="Holsappel S."/>
            <person name="Hosono S."/>
            <person name="Hullo M.-F."/>
            <person name="Itaya M."/>
            <person name="Jones L.-M."/>
            <person name="Joris B."/>
            <person name="Karamata D."/>
            <person name="Kasahara Y."/>
            <person name="Klaerr-Blanchard M."/>
            <person name="Klein C."/>
            <person name="Kobayashi Y."/>
            <person name="Koetter P."/>
            <person name="Koningstein G."/>
            <person name="Krogh S."/>
            <person name="Kumano M."/>
            <person name="Kurita K."/>
            <person name="Lapidus A."/>
            <person name="Lardinois S."/>
            <person name="Lauber J."/>
            <person name="Lazarevic V."/>
            <person name="Lee S.-M."/>
            <person name="Levine A."/>
            <person name="Liu H."/>
            <person name="Masuda S."/>
            <person name="Mauel C."/>
            <person name="Medigue C."/>
            <person name="Medina N."/>
            <person name="Mellado R.P."/>
            <person name="Mizuno M."/>
            <person name="Moestl D."/>
            <person name="Nakai S."/>
            <person name="Noback M."/>
            <person name="Noone D."/>
            <person name="O'Reilly M."/>
            <person name="Ogawa K."/>
            <person name="Ogiwara A."/>
            <person name="Oudega B."/>
            <person name="Park S.-H."/>
            <person name="Parro V."/>
            <person name="Pohl T.M."/>
            <person name="Portetelle D."/>
            <person name="Porwollik S."/>
            <person name="Prescott A.M."/>
            <person name="Presecan E."/>
            <person name="Pujic P."/>
            <person name="Purnelle B."/>
            <person name="Rapoport G."/>
            <person name="Rey M."/>
            <person name="Reynolds S."/>
            <person name="Rieger M."/>
            <person name="Rivolta C."/>
            <person name="Rocha E."/>
            <person name="Roche B."/>
            <person name="Rose M."/>
            <person name="Sadaie Y."/>
            <person name="Sato T."/>
            <person name="Scanlan E."/>
            <person name="Schleich S."/>
            <person name="Schroeter R."/>
            <person name="Scoffone F."/>
            <person name="Sekiguchi J."/>
            <person name="Sekowska A."/>
            <person name="Seror S.J."/>
            <person name="Serror P."/>
            <person name="Shin B.-S."/>
            <person name="Soldo B."/>
            <person name="Sorokin A."/>
            <person name="Tacconi E."/>
            <person name="Takagi T."/>
            <person name="Takahashi H."/>
            <person name="Takemaru K."/>
            <person name="Takeuchi M."/>
            <person name="Tamakoshi A."/>
            <person name="Tanaka T."/>
            <person name="Terpstra P."/>
            <person name="Tognoni A."/>
            <person name="Tosato V."/>
            <person name="Uchiyama S."/>
            <person name="Vandenbol M."/>
            <person name="Vannier F."/>
            <person name="Vassarotti A."/>
            <person name="Viari A."/>
            <person name="Wambutt R."/>
            <person name="Wedler E."/>
            <person name="Wedler H."/>
            <person name="Weitzenegger T."/>
            <person name="Winters P."/>
            <person name="Wipat A."/>
            <person name="Yamamoto H."/>
            <person name="Yamane K."/>
            <person name="Yasumoto K."/>
            <person name="Yata K."/>
            <person name="Yoshida K."/>
            <person name="Yoshikawa H.-F."/>
            <person name="Zumstein E."/>
            <person name="Yoshikawa H."/>
            <person name="Danchin A."/>
        </authorList>
    </citation>
    <scope>NUCLEOTIDE SEQUENCE [LARGE SCALE GENOMIC DNA]</scope>
    <source>
        <strain>168</strain>
    </source>
</reference>